<accession>Q9PLG2</accession>
<comment type="function">
    <text evidence="1">Cell wall formation. Catalyzes the transfer of a GlcNAc subunit on undecaprenyl-pyrophosphoryl-MurNAc-pentapeptide (lipid intermediate I) to form undecaprenyl-pyrophosphoryl-MurNAc-(pentapeptide)GlcNAc (lipid intermediate II).</text>
</comment>
<comment type="catalytic activity">
    <reaction evidence="1">
        <text>di-trans,octa-cis-undecaprenyl diphospho-N-acetyl-alpha-D-muramoyl-L-alanyl-D-glutamyl-meso-2,6-diaminopimeloyl-D-alanyl-D-alanine + UDP-N-acetyl-alpha-D-glucosamine = di-trans,octa-cis-undecaprenyl diphospho-[N-acetyl-alpha-D-glucosaminyl-(1-&gt;4)]-N-acetyl-alpha-D-muramoyl-L-alanyl-D-glutamyl-meso-2,6-diaminopimeloyl-D-alanyl-D-alanine + UDP + H(+)</text>
        <dbReference type="Rhea" id="RHEA:31227"/>
        <dbReference type="ChEBI" id="CHEBI:15378"/>
        <dbReference type="ChEBI" id="CHEBI:57705"/>
        <dbReference type="ChEBI" id="CHEBI:58223"/>
        <dbReference type="ChEBI" id="CHEBI:61387"/>
        <dbReference type="ChEBI" id="CHEBI:61388"/>
        <dbReference type="EC" id="2.4.1.227"/>
    </reaction>
</comment>
<comment type="pathway">
    <text evidence="1">Cell wall biogenesis; peptidoglycan biosynthesis.</text>
</comment>
<comment type="subcellular location">
    <subcellularLocation>
        <location evidence="1">Cell inner membrane</location>
        <topology evidence="1">Peripheral membrane protein</topology>
        <orientation evidence="1">Cytoplasmic side</orientation>
    </subcellularLocation>
</comment>
<comment type="similarity">
    <text evidence="1">Belongs to the glycosyltransferase 28 family. MurG subfamily.</text>
</comment>
<keyword id="KW-0131">Cell cycle</keyword>
<keyword id="KW-0132">Cell division</keyword>
<keyword id="KW-0997">Cell inner membrane</keyword>
<keyword id="KW-1003">Cell membrane</keyword>
<keyword id="KW-0133">Cell shape</keyword>
<keyword id="KW-0961">Cell wall biogenesis/degradation</keyword>
<keyword id="KW-0328">Glycosyltransferase</keyword>
<keyword id="KW-0472">Membrane</keyword>
<keyword id="KW-0573">Peptidoglycan synthesis</keyword>
<keyword id="KW-0808">Transferase</keyword>
<feature type="chain" id="PRO_0000109160" description="UDP-N-acetylglucosamine--N-acetylmuramyl-(pentapeptide) pyrophosphoryl-undecaprenol N-acetylglucosamine transferase">
    <location>
        <begin position="1"/>
        <end position="353"/>
    </location>
</feature>
<feature type="binding site" evidence="1">
    <location>
        <begin position="15"/>
        <end position="17"/>
    </location>
    <ligand>
        <name>UDP-N-acetyl-alpha-D-glucosamine</name>
        <dbReference type="ChEBI" id="CHEBI:57705"/>
    </ligand>
</feature>
<feature type="binding site" evidence="1">
    <location>
        <position position="125"/>
    </location>
    <ligand>
        <name>UDP-N-acetyl-alpha-D-glucosamine</name>
        <dbReference type="ChEBI" id="CHEBI:57705"/>
    </ligand>
</feature>
<feature type="binding site" evidence="1">
    <location>
        <position position="165"/>
    </location>
    <ligand>
        <name>UDP-N-acetyl-alpha-D-glucosamine</name>
        <dbReference type="ChEBI" id="CHEBI:57705"/>
    </ligand>
</feature>
<feature type="binding site" evidence="1">
    <location>
        <position position="186"/>
    </location>
    <ligand>
        <name>UDP-N-acetyl-alpha-D-glucosamine</name>
        <dbReference type="ChEBI" id="CHEBI:57705"/>
    </ligand>
</feature>
<feature type="binding site" evidence="1">
    <location>
        <position position="286"/>
    </location>
    <ligand>
        <name>UDP-N-acetyl-alpha-D-glucosamine</name>
        <dbReference type="ChEBI" id="CHEBI:57705"/>
    </ligand>
</feature>
<name>MURG_CHLMU</name>
<proteinExistence type="inferred from homology"/>
<gene>
    <name evidence="1" type="primary">murG</name>
    <name type="ordered locus">TC_0142</name>
</gene>
<evidence type="ECO:0000255" key="1">
    <source>
        <dbReference type="HAMAP-Rule" id="MF_00033"/>
    </source>
</evidence>
<dbReference type="EC" id="2.4.1.227" evidence="1"/>
<dbReference type="EMBL" id="AE002160">
    <property type="protein sequence ID" value="AAF39020.1"/>
    <property type="molecule type" value="Genomic_DNA"/>
</dbReference>
<dbReference type="PIR" id="A81737">
    <property type="entry name" value="A81737"/>
</dbReference>
<dbReference type="SMR" id="Q9PLG2"/>
<dbReference type="CAZy" id="GT28">
    <property type="family name" value="Glycosyltransferase Family 28"/>
</dbReference>
<dbReference type="KEGG" id="cmu:TC_0142"/>
<dbReference type="eggNOG" id="COG0707">
    <property type="taxonomic scope" value="Bacteria"/>
</dbReference>
<dbReference type="HOGENOM" id="CLU_037404_2_1_0"/>
<dbReference type="UniPathway" id="UPA00219"/>
<dbReference type="Proteomes" id="UP000000800">
    <property type="component" value="Chromosome"/>
</dbReference>
<dbReference type="GO" id="GO:0005886">
    <property type="term" value="C:plasma membrane"/>
    <property type="evidence" value="ECO:0007669"/>
    <property type="project" value="UniProtKB-SubCell"/>
</dbReference>
<dbReference type="GO" id="GO:0051991">
    <property type="term" value="F:UDP-N-acetyl-D-glucosamine:N-acetylmuramoyl-L-alanyl-D-glutamyl-meso-2,6-diaminopimelyl-D-alanyl-D-alanine-diphosphoundecaprenol 4-beta-N-acetylglucosaminlytransferase activity"/>
    <property type="evidence" value="ECO:0007669"/>
    <property type="project" value="RHEA"/>
</dbReference>
<dbReference type="GO" id="GO:0050511">
    <property type="term" value="F:undecaprenyldiphospho-muramoylpentapeptide beta-N-acetylglucosaminyltransferase activity"/>
    <property type="evidence" value="ECO:0007669"/>
    <property type="project" value="UniProtKB-UniRule"/>
</dbReference>
<dbReference type="GO" id="GO:0005975">
    <property type="term" value="P:carbohydrate metabolic process"/>
    <property type="evidence" value="ECO:0007669"/>
    <property type="project" value="InterPro"/>
</dbReference>
<dbReference type="GO" id="GO:0051301">
    <property type="term" value="P:cell division"/>
    <property type="evidence" value="ECO:0007669"/>
    <property type="project" value="UniProtKB-KW"/>
</dbReference>
<dbReference type="GO" id="GO:0071555">
    <property type="term" value="P:cell wall organization"/>
    <property type="evidence" value="ECO:0007669"/>
    <property type="project" value="UniProtKB-KW"/>
</dbReference>
<dbReference type="GO" id="GO:0030259">
    <property type="term" value="P:lipid glycosylation"/>
    <property type="evidence" value="ECO:0007669"/>
    <property type="project" value="UniProtKB-UniRule"/>
</dbReference>
<dbReference type="GO" id="GO:0009252">
    <property type="term" value="P:peptidoglycan biosynthetic process"/>
    <property type="evidence" value="ECO:0007669"/>
    <property type="project" value="UniProtKB-UniRule"/>
</dbReference>
<dbReference type="GO" id="GO:0008360">
    <property type="term" value="P:regulation of cell shape"/>
    <property type="evidence" value="ECO:0007669"/>
    <property type="project" value="UniProtKB-KW"/>
</dbReference>
<dbReference type="CDD" id="cd03785">
    <property type="entry name" value="GT28_MurG"/>
    <property type="match status" value="1"/>
</dbReference>
<dbReference type="Gene3D" id="3.40.50.2000">
    <property type="entry name" value="Glycogen Phosphorylase B"/>
    <property type="match status" value="2"/>
</dbReference>
<dbReference type="HAMAP" id="MF_00033">
    <property type="entry name" value="MurG"/>
    <property type="match status" value="1"/>
</dbReference>
<dbReference type="InterPro" id="IPR006009">
    <property type="entry name" value="GlcNAc_MurG"/>
</dbReference>
<dbReference type="InterPro" id="IPR007235">
    <property type="entry name" value="Glyco_trans_28_C"/>
</dbReference>
<dbReference type="InterPro" id="IPR004276">
    <property type="entry name" value="GlycoTrans_28_N"/>
</dbReference>
<dbReference type="NCBIfam" id="TIGR01133">
    <property type="entry name" value="murG"/>
    <property type="match status" value="1"/>
</dbReference>
<dbReference type="PANTHER" id="PTHR21015:SF22">
    <property type="entry name" value="GLYCOSYLTRANSFERASE"/>
    <property type="match status" value="1"/>
</dbReference>
<dbReference type="PANTHER" id="PTHR21015">
    <property type="entry name" value="UDP-N-ACETYLGLUCOSAMINE--N-ACETYLMURAMYL-(PENTAPEPTIDE) PYROPHOSPHORYL-UNDECAPRENOL N-ACETYLGLUCOSAMINE TRANSFERASE 1"/>
    <property type="match status" value="1"/>
</dbReference>
<dbReference type="Pfam" id="PF04101">
    <property type="entry name" value="Glyco_tran_28_C"/>
    <property type="match status" value="1"/>
</dbReference>
<dbReference type="Pfam" id="PF03033">
    <property type="entry name" value="Glyco_transf_28"/>
    <property type="match status" value="1"/>
</dbReference>
<dbReference type="SUPFAM" id="SSF53756">
    <property type="entry name" value="UDP-Glycosyltransferase/glycogen phosphorylase"/>
    <property type="match status" value="1"/>
</dbReference>
<sequence length="353" mass="38703">MMKKISKVVLAVGGTGGHIIPALAARETFIKEKVEVLLLGKGLTRFLEGEPDVLYYDIPSGSPFSLRPNQMFSGARQLYQGYTAALRMIKSFAPDVAVGFGSYHSLPAILASIRKRIPLFLHEQNVVPGKVNKLFSHFAKGVGMSFSAAGEHFRCRAEEVFLPIREPSEQIVFPEASPVICVVGGSQGAKILNDCVPKALAYVREKHANLYVHHIVGPKGDLEGVSRVYQDAGIQHKVTFFEKNILGVLQASDLVIGRAGATILNELLWVQVPAILIPYPGAHGHQEANAKFFTQTLGGGTMILQKHLTEESLRKQVLLALDPATSENRRKAMLDAQKNKSFKSLYQFICESL</sequence>
<protein>
    <recommendedName>
        <fullName evidence="1">UDP-N-acetylglucosamine--N-acetylmuramyl-(pentapeptide) pyrophosphoryl-undecaprenol N-acetylglucosamine transferase</fullName>
        <ecNumber evidence="1">2.4.1.227</ecNumber>
    </recommendedName>
    <alternativeName>
        <fullName evidence="1">Undecaprenyl-PP-MurNAc-pentapeptide-UDPGlcNAc GlcNAc transferase</fullName>
    </alternativeName>
</protein>
<organism>
    <name type="scientific">Chlamydia muridarum (strain MoPn / Nigg)</name>
    <dbReference type="NCBI Taxonomy" id="243161"/>
    <lineage>
        <taxon>Bacteria</taxon>
        <taxon>Pseudomonadati</taxon>
        <taxon>Chlamydiota</taxon>
        <taxon>Chlamydiia</taxon>
        <taxon>Chlamydiales</taxon>
        <taxon>Chlamydiaceae</taxon>
        <taxon>Chlamydia/Chlamydophila group</taxon>
        <taxon>Chlamydia</taxon>
    </lineage>
</organism>
<reference key="1">
    <citation type="journal article" date="2000" name="Nucleic Acids Res.">
        <title>Genome sequences of Chlamydia trachomatis MoPn and Chlamydia pneumoniae AR39.</title>
        <authorList>
            <person name="Read T.D."/>
            <person name="Brunham R.C."/>
            <person name="Shen C."/>
            <person name="Gill S.R."/>
            <person name="Heidelberg J.F."/>
            <person name="White O."/>
            <person name="Hickey E.K."/>
            <person name="Peterson J.D."/>
            <person name="Utterback T.R."/>
            <person name="Berry K.J."/>
            <person name="Bass S."/>
            <person name="Linher K.D."/>
            <person name="Weidman J.F."/>
            <person name="Khouri H.M."/>
            <person name="Craven B."/>
            <person name="Bowman C."/>
            <person name="Dodson R.J."/>
            <person name="Gwinn M.L."/>
            <person name="Nelson W.C."/>
            <person name="DeBoy R.T."/>
            <person name="Kolonay J.F."/>
            <person name="McClarty G."/>
            <person name="Salzberg S.L."/>
            <person name="Eisen J.A."/>
            <person name="Fraser C.M."/>
        </authorList>
    </citation>
    <scope>NUCLEOTIDE SEQUENCE [LARGE SCALE GENOMIC DNA]</scope>
    <source>
        <strain>MoPn / Nigg</strain>
    </source>
</reference>